<accession>A9MP60</accession>
<dbReference type="EC" id="1.4.99.-" evidence="1"/>
<dbReference type="EMBL" id="CP000880">
    <property type="protein sequence ID" value="ABX21041.1"/>
    <property type="molecule type" value="Genomic_DNA"/>
</dbReference>
<dbReference type="SMR" id="A9MP60"/>
<dbReference type="STRING" id="41514.SARI_01136"/>
<dbReference type="KEGG" id="ses:SARI_01136"/>
<dbReference type="HOGENOM" id="CLU_007884_9_2_6"/>
<dbReference type="UniPathway" id="UPA00043">
    <property type="reaction ID" value="UER00498"/>
</dbReference>
<dbReference type="Proteomes" id="UP000002084">
    <property type="component" value="Chromosome"/>
</dbReference>
<dbReference type="GO" id="GO:0005737">
    <property type="term" value="C:cytoplasm"/>
    <property type="evidence" value="ECO:0007669"/>
    <property type="project" value="TreeGrafter"/>
</dbReference>
<dbReference type="GO" id="GO:0005886">
    <property type="term" value="C:plasma membrane"/>
    <property type="evidence" value="ECO:0007669"/>
    <property type="project" value="TreeGrafter"/>
</dbReference>
<dbReference type="GO" id="GO:0008718">
    <property type="term" value="F:D-amino-acid dehydrogenase activity"/>
    <property type="evidence" value="ECO:0007669"/>
    <property type="project" value="UniProtKB-UniRule"/>
</dbReference>
<dbReference type="GO" id="GO:0055130">
    <property type="term" value="P:D-alanine catabolic process"/>
    <property type="evidence" value="ECO:0007669"/>
    <property type="project" value="UniProtKB-UniPathway"/>
</dbReference>
<dbReference type="FunFam" id="3.50.50.60:FF:000020">
    <property type="entry name" value="D-amino acid dehydrogenase"/>
    <property type="match status" value="1"/>
</dbReference>
<dbReference type="Gene3D" id="3.30.9.10">
    <property type="entry name" value="D-Amino Acid Oxidase, subunit A, domain 2"/>
    <property type="match status" value="1"/>
</dbReference>
<dbReference type="Gene3D" id="3.50.50.60">
    <property type="entry name" value="FAD/NAD(P)-binding domain"/>
    <property type="match status" value="2"/>
</dbReference>
<dbReference type="HAMAP" id="MF_01202">
    <property type="entry name" value="DadA"/>
    <property type="match status" value="1"/>
</dbReference>
<dbReference type="InterPro" id="IPR023080">
    <property type="entry name" value="DadA"/>
</dbReference>
<dbReference type="InterPro" id="IPR006076">
    <property type="entry name" value="FAD-dep_OxRdtase"/>
</dbReference>
<dbReference type="InterPro" id="IPR036188">
    <property type="entry name" value="FAD/NAD-bd_sf"/>
</dbReference>
<dbReference type="NCBIfam" id="NF001933">
    <property type="entry name" value="PRK00711.1"/>
    <property type="match status" value="1"/>
</dbReference>
<dbReference type="PANTHER" id="PTHR13847:SF280">
    <property type="entry name" value="D-AMINO ACID DEHYDROGENASE"/>
    <property type="match status" value="1"/>
</dbReference>
<dbReference type="PANTHER" id="PTHR13847">
    <property type="entry name" value="SARCOSINE DEHYDROGENASE-RELATED"/>
    <property type="match status" value="1"/>
</dbReference>
<dbReference type="Pfam" id="PF01266">
    <property type="entry name" value="DAO"/>
    <property type="match status" value="1"/>
</dbReference>
<dbReference type="SUPFAM" id="SSF54373">
    <property type="entry name" value="FAD-linked reductases, C-terminal domain"/>
    <property type="match status" value="1"/>
</dbReference>
<dbReference type="SUPFAM" id="SSF51905">
    <property type="entry name" value="FAD/NAD(P)-binding domain"/>
    <property type="match status" value="1"/>
</dbReference>
<name>DADA_SALAR</name>
<reference key="1">
    <citation type="submission" date="2007-11" db="EMBL/GenBank/DDBJ databases">
        <authorList>
            <consortium name="The Salmonella enterica serovar Arizonae Genome Sequencing Project"/>
            <person name="McClelland M."/>
            <person name="Sanderson E.K."/>
            <person name="Porwollik S."/>
            <person name="Spieth J."/>
            <person name="Clifton W.S."/>
            <person name="Fulton R."/>
            <person name="Chunyan W."/>
            <person name="Wollam A."/>
            <person name="Shah N."/>
            <person name="Pepin K."/>
            <person name="Bhonagiri V."/>
            <person name="Nash W."/>
            <person name="Johnson M."/>
            <person name="Thiruvilangam P."/>
            <person name="Wilson R."/>
        </authorList>
    </citation>
    <scope>NUCLEOTIDE SEQUENCE [LARGE SCALE GENOMIC DNA]</scope>
    <source>
        <strain>ATCC BAA-731 / CDC346-86 / RSK2980</strain>
    </source>
</reference>
<sequence>MRVVILGSGVVGVTSAWYLSQAGHDVTVIDRESGPAQGTSAANAGQISPGYAAPWAAPGVPLKAIKWMFQRHAPLAVRLDGTPFQLKWMWQMLRNCDTRHYMENKGRMVRLAEYSRDCLKTLRAETGIKYEGRQGGTLQLFRTARQYENATRDIAVLEDAGVPYQLLESSRLAEVEPALAEVAHKLTGGLRLPNDETGDCQLFTQRLAHMAEQAGVTFRFNTPVEKLLYENEQIYGVKCADEIIKADAYVMAFGSYSTAMLKGIVDIPVYPLKGYSLTIPIVEPDGAPVSTILDETYKIAITRFDKRIRVGGMAEIVGFNTDLQQPRRETLEMVVRDLFPRGGRIEQATFWTGLRPMTPDGTPVVGRTRFKNLWLNTGHGTLGWTMACGSGQLLSDILSGRTPAIPYDDLSIARYRSDFAPSRQQRLHSAHN</sequence>
<feature type="chain" id="PRO_1000085515" description="D-amino acid dehydrogenase">
    <location>
        <begin position="1"/>
        <end position="432"/>
    </location>
</feature>
<feature type="binding site" evidence="1">
    <location>
        <begin position="3"/>
        <end position="17"/>
    </location>
    <ligand>
        <name>FAD</name>
        <dbReference type="ChEBI" id="CHEBI:57692"/>
    </ligand>
</feature>
<protein>
    <recommendedName>
        <fullName evidence="1">D-amino acid dehydrogenase</fullName>
        <ecNumber evidence="1">1.4.99.-</ecNumber>
    </recommendedName>
</protein>
<gene>
    <name evidence="1" type="primary">dadA</name>
    <name type="ordered locus">SARI_01136</name>
</gene>
<comment type="function">
    <text evidence="1">Oxidative deamination of D-amino acids.</text>
</comment>
<comment type="catalytic activity">
    <reaction evidence="1">
        <text>a D-alpha-amino acid + A + H2O = a 2-oxocarboxylate + AH2 + NH4(+)</text>
        <dbReference type="Rhea" id="RHEA:18125"/>
        <dbReference type="ChEBI" id="CHEBI:13193"/>
        <dbReference type="ChEBI" id="CHEBI:15377"/>
        <dbReference type="ChEBI" id="CHEBI:17499"/>
        <dbReference type="ChEBI" id="CHEBI:28938"/>
        <dbReference type="ChEBI" id="CHEBI:35179"/>
        <dbReference type="ChEBI" id="CHEBI:59871"/>
    </reaction>
</comment>
<comment type="cofactor">
    <cofactor evidence="1">
        <name>FAD</name>
        <dbReference type="ChEBI" id="CHEBI:57692"/>
    </cofactor>
</comment>
<comment type="pathway">
    <text>Amino-acid degradation; D-alanine degradation; NH(3) and pyruvate from D-alanine: step 1/1.</text>
</comment>
<comment type="similarity">
    <text evidence="1">Belongs to the DadA oxidoreductase family.</text>
</comment>
<proteinExistence type="inferred from homology"/>
<evidence type="ECO:0000255" key="1">
    <source>
        <dbReference type="HAMAP-Rule" id="MF_01202"/>
    </source>
</evidence>
<keyword id="KW-0274">FAD</keyword>
<keyword id="KW-0285">Flavoprotein</keyword>
<keyword id="KW-0560">Oxidoreductase</keyword>
<keyword id="KW-1185">Reference proteome</keyword>
<organism>
    <name type="scientific">Salmonella arizonae (strain ATCC BAA-731 / CDC346-86 / RSK2980)</name>
    <dbReference type="NCBI Taxonomy" id="41514"/>
    <lineage>
        <taxon>Bacteria</taxon>
        <taxon>Pseudomonadati</taxon>
        <taxon>Pseudomonadota</taxon>
        <taxon>Gammaproteobacteria</taxon>
        <taxon>Enterobacterales</taxon>
        <taxon>Enterobacteriaceae</taxon>
        <taxon>Salmonella</taxon>
    </lineage>
</organism>